<keyword id="KW-0963">Cytoplasm</keyword>
<keyword id="KW-0460">Magnesium</keyword>
<keyword id="KW-0479">Metal-binding</keyword>
<keyword id="KW-0548">Nucleotidyltransferase</keyword>
<keyword id="KW-1185">Reference proteome</keyword>
<keyword id="KW-0694">RNA-binding</keyword>
<keyword id="KW-0808">Transferase</keyword>
<gene>
    <name evidence="1" type="primary">pnp</name>
    <name type="ordered locus">PSPTO_4486</name>
</gene>
<feature type="chain" id="PRO_0000329789" description="Polyribonucleotide nucleotidyltransferase">
    <location>
        <begin position="1"/>
        <end position="701"/>
    </location>
</feature>
<feature type="domain" description="KH" evidence="1">
    <location>
        <begin position="554"/>
        <end position="613"/>
    </location>
</feature>
<feature type="domain" description="S1 motif" evidence="1">
    <location>
        <begin position="623"/>
        <end position="691"/>
    </location>
</feature>
<feature type="binding site" evidence="1">
    <location>
        <position position="487"/>
    </location>
    <ligand>
        <name>Mg(2+)</name>
        <dbReference type="ChEBI" id="CHEBI:18420"/>
    </ligand>
</feature>
<feature type="binding site" evidence="1">
    <location>
        <position position="493"/>
    </location>
    <ligand>
        <name>Mg(2+)</name>
        <dbReference type="ChEBI" id="CHEBI:18420"/>
    </ligand>
</feature>
<accession>Q87WQ8</accession>
<name>PNP_PSESM</name>
<dbReference type="EC" id="2.7.7.8" evidence="1"/>
<dbReference type="EMBL" id="AE016853">
    <property type="protein sequence ID" value="AAO57935.1"/>
    <property type="molecule type" value="Genomic_DNA"/>
</dbReference>
<dbReference type="RefSeq" id="NP_794240.1">
    <property type="nucleotide sequence ID" value="NC_004578.1"/>
</dbReference>
<dbReference type="RefSeq" id="WP_003377508.1">
    <property type="nucleotide sequence ID" value="NC_004578.1"/>
</dbReference>
<dbReference type="SMR" id="Q87WQ8"/>
<dbReference type="STRING" id="223283.PSPTO_4486"/>
<dbReference type="GeneID" id="1186167"/>
<dbReference type="KEGG" id="pst:PSPTO_4486"/>
<dbReference type="PATRIC" id="fig|223283.9.peg.4601"/>
<dbReference type="eggNOG" id="COG1185">
    <property type="taxonomic scope" value="Bacteria"/>
</dbReference>
<dbReference type="HOGENOM" id="CLU_004217_2_2_6"/>
<dbReference type="OrthoDB" id="9804305at2"/>
<dbReference type="PhylomeDB" id="Q87WQ8"/>
<dbReference type="Proteomes" id="UP000002515">
    <property type="component" value="Chromosome"/>
</dbReference>
<dbReference type="GO" id="GO:0005829">
    <property type="term" value="C:cytosol"/>
    <property type="evidence" value="ECO:0007669"/>
    <property type="project" value="TreeGrafter"/>
</dbReference>
<dbReference type="GO" id="GO:0000175">
    <property type="term" value="F:3'-5'-RNA exonuclease activity"/>
    <property type="evidence" value="ECO:0007669"/>
    <property type="project" value="TreeGrafter"/>
</dbReference>
<dbReference type="GO" id="GO:0000287">
    <property type="term" value="F:magnesium ion binding"/>
    <property type="evidence" value="ECO:0007669"/>
    <property type="project" value="UniProtKB-UniRule"/>
</dbReference>
<dbReference type="GO" id="GO:0004654">
    <property type="term" value="F:polyribonucleotide nucleotidyltransferase activity"/>
    <property type="evidence" value="ECO:0007669"/>
    <property type="project" value="UniProtKB-UniRule"/>
</dbReference>
<dbReference type="GO" id="GO:0003723">
    <property type="term" value="F:RNA binding"/>
    <property type="evidence" value="ECO:0007669"/>
    <property type="project" value="UniProtKB-UniRule"/>
</dbReference>
<dbReference type="GO" id="GO:0006402">
    <property type="term" value="P:mRNA catabolic process"/>
    <property type="evidence" value="ECO:0007669"/>
    <property type="project" value="UniProtKB-UniRule"/>
</dbReference>
<dbReference type="GO" id="GO:0006396">
    <property type="term" value="P:RNA processing"/>
    <property type="evidence" value="ECO:0007669"/>
    <property type="project" value="InterPro"/>
</dbReference>
<dbReference type="CDD" id="cd02393">
    <property type="entry name" value="KH-I_PNPase"/>
    <property type="match status" value="1"/>
</dbReference>
<dbReference type="CDD" id="cd11363">
    <property type="entry name" value="RNase_PH_PNPase_1"/>
    <property type="match status" value="1"/>
</dbReference>
<dbReference type="CDD" id="cd11364">
    <property type="entry name" value="RNase_PH_PNPase_2"/>
    <property type="match status" value="1"/>
</dbReference>
<dbReference type="CDD" id="cd04472">
    <property type="entry name" value="S1_PNPase"/>
    <property type="match status" value="1"/>
</dbReference>
<dbReference type="FunFam" id="2.40.50.140:FF:000023">
    <property type="entry name" value="Polyribonucleotide nucleotidyltransferase"/>
    <property type="match status" value="1"/>
</dbReference>
<dbReference type="FunFam" id="3.30.1370.10:FF:000001">
    <property type="entry name" value="Polyribonucleotide nucleotidyltransferase"/>
    <property type="match status" value="1"/>
</dbReference>
<dbReference type="FunFam" id="3.30.230.70:FF:000001">
    <property type="entry name" value="Polyribonucleotide nucleotidyltransferase"/>
    <property type="match status" value="1"/>
</dbReference>
<dbReference type="FunFam" id="3.30.230.70:FF:000002">
    <property type="entry name" value="Polyribonucleotide nucleotidyltransferase"/>
    <property type="match status" value="1"/>
</dbReference>
<dbReference type="Gene3D" id="3.30.230.70">
    <property type="entry name" value="GHMP Kinase, N-terminal domain"/>
    <property type="match status" value="2"/>
</dbReference>
<dbReference type="Gene3D" id="3.30.1370.10">
    <property type="entry name" value="K Homology domain, type 1"/>
    <property type="match status" value="1"/>
</dbReference>
<dbReference type="Gene3D" id="2.40.50.140">
    <property type="entry name" value="Nucleic acid-binding proteins"/>
    <property type="match status" value="1"/>
</dbReference>
<dbReference type="HAMAP" id="MF_01595">
    <property type="entry name" value="PNPase"/>
    <property type="match status" value="1"/>
</dbReference>
<dbReference type="InterPro" id="IPR001247">
    <property type="entry name" value="ExoRNase_PH_dom1"/>
</dbReference>
<dbReference type="InterPro" id="IPR015847">
    <property type="entry name" value="ExoRNase_PH_dom2"/>
</dbReference>
<dbReference type="InterPro" id="IPR036345">
    <property type="entry name" value="ExoRNase_PH_dom2_sf"/>
</dbReference>
<dbReference type="InterPro" id="IPR004087">
    <property type="entry name" value="KH_dom"/>
</dbReference>
<dbReference type="InterPro" id="IPR004088">
    <property type="entry name" value="KH_dom_type_1"/>
</dbReference>
<dbReference type="InterPro" id="IPR036612">
    <property type="entry name" value="KH_dom_type_1_sf"/>
</dbReference>
<dbReference type="InterPro" id="IPR012340">
    <property type="entry name" value="NA-bd_OB-fold"/>
</dbReference>
<dbReference type="InterPro" id="IPR012162">
    <property type="entry name" value="PNPase"/>
</dbReference>
<dbReference type="InterPro" id="IPR027408">
    <property type="entry name" value="PNPase/RNase_PH_dom_sf"/>
</dbReference>
<dbReference type="InterPro" id="IPR015848">
    <property type="entry name" value="PNPase_PH_RNA-bd_bac/org-type"/>
</dbReference>
<dbReference type="InterPro" id="IPR036456">
    <property type="entry name" value="PNPase_PH_RNA-bd_sf"/>
</dbReference>
<dbReference type="InterPro" id="IPR020568">
    <property type="entry name" value="Ribosomal_Su5_D2-typ_SF"/>
</dbReference>
<dbReference type="InterPro" id="IPR003029">
    <property type="entry name" value="S1_domain"/>
</dbReference>
<dbReference type="NCBIfam" id="TIGR03591">
    <property type="entry name" value="polynuc_phos"/>
    <property type="match status" value="1"/>
</dbReference>
<dbReference type="NCBIfam" id="NF008805">
    <property type="entry name" value="PRK11824.1"/>
    <property type="match status" value="1"/>
</dbReference>
<dbReference type="PANTHER" id="PTHR11252">
    <property type="entry name" value="POLYRIBONUCLEOTIDE NUCLEOTIDYLTRANSFERASE"/>
    <property type="match status" value="1"/>
</dbReference>
<dbReference type="PANTHER" id="PTHR11252:SF0">
    <property type="entry name" value="POLYRIBONUCLEOTIDE NUCLEOTIDYLTRANSFERASE 1, MITOCHONDRIAL"/>
    <property type="match status" value="1"/>
</dbReference>
<dbReference type="Pfam" id="PF00013">
    <property type="entry name" value="KH_1"/>
    <property type="match status" value="1"/>
</dbReference>
<dbReference type="Pfam" id="PF03726">
    <property type="entry name" value="PNPase"/>
    <property type="match status" value="1"/>
</dbReference>
<dbReference type="Pfam" id="PF01138">
    <property type="entry name" value="RNase_PH"/>
    <property type="match status" value="2"/>
</dbReference>
<dbReference type="Pfam" id="PF03725">
    <property type="entry name" value="RNase_PH_C"/>
    <property type="match status" value="2"/>
</dbReference>
<dbReference type="Pfam" id="PF00575">
    <property type="entry name" value="S1"/>
    <property type="match status" value="1"/>
</dbReference>
<dbReference type="PIRSF" id="PIRSF005499">
    <property type="entry name" value="PNPase"/>
    <property type="match status" value="1"/>
</dbReference>
<dbReference type="SMART" id="SM00322">
    <property type="entry name" value="KH"/>
    <property type="match status" value="1"/>
</dbReference>
<dbReference type="SMART" id="SM00316">
    <property type="entry name" value="S1"/>
    <property type="match status" value="1"/>
</dbReference>
<dbReference type="SUPFAM" id="SSF54791">
    <property type="entry name" value="Eukaryotic type KH-domain (KH-domain type I)"/>
    <property type="match status" value="1"/>
</dbReference>
<dbReference type="SUPFAM" id="SSF50249">
    <property type="entry name" value="Nucleic acid-binding proteins"/>
    <property type="match status" value="1"/>
</dbReference>
<dbReference type="SUPFAM" id="SSF46915">
    <property type="entry name" value="Polynucleotide phosphorylase/guanosine pentaphosphate synthase (PNPase/GPSI), domain 3"/>
    <property type="match status" value="1"/>
</dbReference>
<dbReference type="SUPFAM" id="SSF55666">
    <property type="entry name" value="Ribonuclease PH domain 2-like"/>
    <property type="match status" value="2"/>
</dbReference>
<dbReference type="SUPFAM" id="SSF54211">
    <property type="entry name" value="Ribosomal protein S5 domain 2-like"/>
    <property type="match status" value="2"/>
</dbReference>
<dbReference type="PROSITE" id="PS50084">
    <property type="entry name" value="KH_TYPE_1"/>
    <property type="match status" value="1"/>
</dbReference>
<dbReference type="PROSITE" id="PS50126">
    <property type="entry name" value="S1"/>
    <property type="match status" value="1"/>
</dbReference>
<protein>
    <recommendedName>
        <fullName evidence="1">Polyribonucleotide nucleotidyltransferase</fullName>
        <ecNumber evidence="1">2.7.7.8</ecNumber>
    </recommendedName>
    <alternativeName>
        <fullName evidence="1">Polynucleotide phosphorylase</fullName>
        <shortName evidence="1">PNPase</shortName>
    </alternativeName>
</protein>
<reference key="1">
    <citation type="journal article" date="2003" name="Proc. Natl. Acad. Sci. U.S.A.">
        <title>The complete genome sequence of the Arabidopsis and tomato pathogen Pseudomonas syringae pv. tomato DC3000.</title>
        <authorList>
            <person name="Buell C.R."/>
            <person name="Joardar V."/>
            <person name="Lindeberg M."/>
            <person name="Selengut J."/>
            <person name="Paulsen I.T."/>
            <person name="Gwinn M.L."/>
            <person name="Dodson R.J."/>
            <person name="DeBoy R.T."/>
            <person name="Durkin A.S."/>
            <person name="Kolonay J.F."/>
            <person name="Madupu R."/>
            <person name="Daugherty S.C."/>
            <person name="Brinkac L.M."/>
            <person name="Beanan M.J."/>
            <person name="Haft D.H."/>
            <person name="Nelson W.C."/>
            <person name="Davidsen T.M."/>
            <person name="Zafar N."/>
            <person name="Zhou L."/>
            <person name="Liu J."/>
            <person name="Yuan Q."/>
            <person name="Khouri H.M."/>
            <person name="Fedorova N.B."/>
            <person name="Tran B."/>
            <person name="Russell D."/>
            <person name="Berry K.J."/>
            <person name="Utterback T.R."/>
            <person name="Van Aken S.E."/>
            <person name="Feldblyum T.V."/>
            <person name="D'Ascenzo M."/>
            <person name="Deng W.-L."/>
            <person name="Ramos A.R."/>
            <person name="Alfano J.R."/>
            <person name="Cartinhour S."/>
            <person name="Chatterjee A.K."/>
            <person name="Delaney T.P."/>
            <person name="Lazarowitz S.G."/>
            <person name="Martin G.B."/>
            <person name="Schneider D.J."/>
            <person name="Tang X."/>
            <person name="Bender C.L."/>
            <person name="White O."/>
            <person name="Fraser C.M."/>
            <person name="Collmer A."/>
        </authorList>
    </citation>
    <scope>NUCLEOTIDE SEQUENCE [LARGE SCALE GENOMIC DNA]</scope>
    <source>
        <strain>ATCC BAA-871 / DC3000</strain>
    </source>
</reference>
<evidence type="ECO:0000255" key="1">
    <source>
        <dbReference type="HAMAP-Rule" id="MF_01595"/>
    </source>
</evidence>
<comment type="function">
    <text evidence="1">Involved in mRNA degradation. Catalyzes the phosphorolysis of single-stranded polyribonucleotides processively in the 3'- to 5'-direction.</text>
</comment>
<comment type="catalytic activity">
    <reaction evidence="1">
        <text>RNA(n+1) + phosphate = RNA(n) + a ribonucleoside 5'-diphosphate</text>
        <dbReference type="Rhea" id="RHEA:22096"/>
        <dbReference type="Rhea" id="RHEA-COMP:14527"/>
        <dbReference type="Rhea" id="RHEA-COMP:17342"/>
        <dbReference type="ChEBI" id="CHEBI:43474"/>
        <dbReference type="ChEBI" id="CHEBI:57930"/>
        <dbReference type="ChEBI" id="CHEBI:140395"/>
        <dbReference type="EC" id="2.7.7.8"/>
    </reaction>
</comment>
<comment type="cofactor">
    <cofactor evidence="1">
        <name>Mg(2+)</name>
        <dbReference type="ChEBI" id="CHEBI:18420"/>
    </cofactor>
</comment>
<comment type="subunit">
    <text evidence="1">Component of the RNA degradosome, which is a multiprotein complex involved in RNA processing and mRNA degradation.</text>
</comment>
<comment type="subcellular location">
    <subcellularLocation>
        <location evidence="1">Cytoplasm</location>
    </subcellularLocation>
</comment>
<comment type="similarity">
    <text evidence="1">Belongs to the polyribonucleotide nucleotidyltransferase family.</text>
</comment>
<sequence length="701" mass="74927">MNPVIKKFQFGQSTVTLETGRIARQASGAVLVTVDDDVSVLVTVVGAKQADAGKGFFPLSVHYQEKTYAAGKIPGGFFKREGRPSEKETLTSRLIDRPIRPLFPEGFMNEVQVVCTVVSTSKKIDPDIAAMIGTSAALAISGIPFDGPVGAARVAFHESTGYLLNPTYEQLQASSLDMVVAGTSEAVLMVESEAKELTEDQMLGAVLFAHDEFQVVINAIKELAAEAAKPTWDWQPKPEATALLGAIRAEFGDAISQAYTITVKADRYARLGELKDQVVAKLAVEEGSPSAGEVKAAFGEIEYRTVRENIVNGKPRIDGRDTRTVRPLNIEVGVLPKTHGSALFTRGETQALVVATLGTARDAQLLDTLEGEKKDPFMLHYNFPPFSVGECGRMGGAGRREIGHGRLARRSVQAMLPGADVFPYTIRVVSEITESNGSSSMASVCGASLALMDAGVPMKAPVAGIAMGLVKEGEKFAILTDILGDEDHLGDMDFKVAGTSKGVTALQMDIKIKGITEEIMEIALGQALEARLNILGQMNQIIGQSRNELSANAPTMIAMKIDTDKIRDVIGKGGATIRAICEETKASIDIEDDGSIKIFGESKEAAEAARQRVLGITAEAEIGKIYLGKVERIVDFGAFVNILPGKDGLVHISMLSDARVEKVTDILKEGEEVEVLVLDVDNRGRIKLSIKDVAAAKASGV</sequence>
<proteinExistence type="inferred from homology"/>
<organism>
    <name type="scientific">Pseudomonas syringae pv. tomato (strain ATCC BAA-871 / DC3000)</name>
    <dbReference type="NCBI Taxonomy" id="223283"/>
    <lineage>
        <taxon>Bacteria</taxon>
        <taxon>Pseudomonadati</taxon>
        <taxon>Pseudomonadota</taxon>
        <taxon>Gammaproteobacteria</taxon>
        <taxon>Pseudomonadales</taxon>
        <taxon>Pseudomonadaceae</taxon>
        <taxon>Pseudomonas</taxon>
    </lineage>
</organism>